<name>PDRP_RHOPT</name>
<comment type="function">
    <text evidence="1">Bifunctional serine/threonine kinase and phosphorylase involved in the regulation of the pyruvate, phosphate dikinase (PPDK) by catalyzing its phosphorylation/dephosphorylation.</text>
</comment>
<comment type="catalytic activity">
    <reaction evidence="1">
        <text>N(tele)-phospho-L-histidyl/L-threonyl-[pyruvate, phosphate dikinase] + ADP = N(tele)-phospho-L-histidyl/O-phospho-L-threonyl-[pyruvate, phosphate dikinase] + AMP + H(+)</text>
        <dbReference type="Rhea" id="RHEA:43692"/>
        <dbReference type="Rhea" id="RHEA-COMP:10650"/>
        <dbReference type="Rhea" id="RHEA-COMP:10651"/>
        <dbReference type="ChEBI" id="CHEBI:15378"/>
        <dbReference type="ChEBI" id="CHEBI:30013"/>
        <dbReference type="ChEBI" id="CHEBI:61977"/>
        <dbReference type="ChEBI" id="CHEBI:83586"/>
        <dbReference type="ChEBI" id="CHEBI:456215"/>
        <dbReference type="ChEBI" id="CHEBI:456216"/>
        <dbReference type="EC" id="2.7.11.32"/>
    </reaction>
</comment>
<comment type="catalytic activity">
    <reaction evidence="1">
        <text>N(tele)-phospho-L-histidyl/O-phospho-L-threonyl-[pyruvate, phosphate dikinase] + phosphate + H(+) = N(tele)-phospho-L-histidyl/L-threonyl-[pyruvate, phosphate dikinase] + diphosphate</text>
        <dbReference type="Rhea" id="RHEA:43696"/>
        <dbReference type="Rhea" id="RHEA-COMP:10650"/>
        <dbReference type="Rhea" id="RHEA-COMP:10651"/>
        <dbReference type="ChEBI" id="CHEBI:15378"/>
        <dbReference type="ChEBI" id="CHEBI:30013"/>
        <dbReference type="ChEBI" id="CHEBI:33019"/>
        <dbReference type="ChEBI" id="CHEBI:43474"/>
        <dbReference type="ChEBI" id="CHEBI:61977"/>
        <dbReference type="ChEBI" id="CHEBI:83586"/>
        <dbReference type="EC" id="2.7.4.27"/>
    </reaction>
</comment>
<comment type="similarity">
    <text evidence="1">Belongs to the pyruvate, phosphate/water dikinase regulatory protein family. PDRP subfamily.</text>
</comment>
<proteinExistence type="inferred from homology"/>
<reference key="1">
    <citation type="submission" date="2008-05" db="EMBL/GenBank/DDBJ databases">
        <title>Complete sequence of Rhodopseudomonas palustris TIE-1.</title>
        <authorList>
            <consortium name="US DOE Joint Genome Institute"/>
            <person name="Lucas S."/>
            <person name="Copeland A."/>
            <person name="Lapidus A."/>
            <person name="Glavina del Rio T."/>
            <person name="Dalin E."/>
            <person name="Tice H."/>
            <person name="Pitluck S."/>
            <person name="Chain P."/>
            <person name="Malfatti S."/>
            <person name="Shin M."/>
            <person name="Vergez L."/>
            <person name="Lang D."/>
            <person name="Schmutz J."/>
            <person name="Larimer F."/>
            <person name="Land M."/>
            <person name="Hauser L."/>
            <person name="Kyrpides N."/>
            <person name="Mikhailova N."/>
            <person name="Emerson D."/>
            <person name="Newman D.K."/>
            <person name="Roden E."/>
            <person name="Richardson P."/>
        </authorList>
    </citation>
    <scope>NUCLEOTIDE SEQUENCE [LARGE SCALE GENOMIC DNA]</scope>
    <source>
        <strain>TIE-1</strain>
    </source>
</reference>
<keyword id="KW-0418">Kinase</keyword>
<keyword id="KW-0547">Nucleotide-binding</keyword>
<keyword id="KW-0723">Serine/threonine-protein kinase</keyword>
<keyword id="KW-0808">Transferase</keyword>
<protein>
    <recommendedName>
        <fullName evidence="1">Putative pyruvate, phosphate dikinase regulatory protein</fullName>
        <shortName evidence="1">PPDK regulatory protein</shortName>
        <ecNumber evidence="1">2.7.11.32</ecNumber>
        <ecNumber evidence="1">2.7.4.27</ecNumber>
    </recommendedName>
</protein>
<sequence length="279" mass="30864">MLTDGSYFHLHLVSDSTGETLITVSRAVTAQYANVTPVEHVYPLVRSQKQLDRVLQEIEEAPGIVLFTLLETELVNRLEAKCQEINSPSLSIIGPVMQLFEAYLGASTMGRVGAQHTLNAEYFQRIDALNYSMMHDDGQHVEGLEEADVVLVGVSRTSKTPTSIYLANRGIRTANVPLVAGIPIPHQLETLKKPLVVSLHASPERLIQVRQNRLLSLGAGSGNDSYIDRQAVTDEVLLARKLSAKYGWSLLDVTRRSIEETAAAIMKLLADRQRQRVPE</sequence>
<evidence type="ECO:0000255" key="1">
    <source>
        <dbReference type="HAMAP-Rule" id="MF_00921"/>
    </source>
</evidence>
<feature type="chain" id="PRO_1000136487" description="Putative pyruvate, phosphate dikinase regulatory protein">
    <location>
        <begin position="1"/>
        <end position="279"/>
    </location>
</feature>
<feature type="binding site" evidence="1">
    <location>
        <begin position="153"/>
        <end position="160"/>
    </location>
    <ligand>
        <name>ADP</name>
        <dbReference type="ChEBI" id="CHEBI:456216"/>
    </ligand>
</feature>
<gene>
    <name type="ordered locus">Rpal_0300</name>
</gene>
<dbReference type="EC" id="2.7.11.32" evidence="1"/>
<dbReference type="EC" id="2.7.4.27" evidence="1"/>
<dbReference type="EMBL" id="CP001096">
    <property type="protein sequence ID" value="ACE98860.1"/>
    <property type="molecule type" value="Genomic_DNA"/>
</dbReference>
<dbReference type="RefSeq" id="WP_011155866.1">
    <property type="nucleotide sequence ID" value="NC_011004.1"/>
</dbReference>
<dbReference type="SMR" id="B3Q8B1"/>
<dbReference type="KEGG" id="rpt:Rpal_0300"/>
<dbReference type="HOGENOM" id="CLU_046206_2_0_5"/>
<dbReference type="OrthoDB" id="9782201at2"/>
<dbReference type="Proteomes" id="UP000001725">
    <property type="component" value="Chromosome"/>
</dbReference>
<dbReference type="GO" id="GO:0043531">
    <property type="term" value="F:ADP binding"/>
    <property type="evidence" value="ECO:0007669"/>
    <property type="project" value="UniProtKB-UniRule"/>
</dbReference>
<dbReference type="GO" id="GO:0005524">
    <property type="term" value="F:ATP binding"/>
    <property type="evidence" value="ECO:0007669"/>
    <property type="project" value="InterPro"/>
</dbReference>
<dbReference type="GO" id="GO:0016776">
    <property type="term" value="F:phosphotransferase activity, phosphate group as acceptor"/>
    <property type="evidence" value="ECO:0007669"/>
    <property type="project" value="UniProtKB-UniRule"/>
</dbReference>
<dbReference type="GO" id="GO:0004674">
    <property type="term" value="F:protein serine/threonine kinase activity"/>
    <property type="evidence" value="ECO:0007669"/>
    <property type="project" value="UniProtKB-UniRule"/>
</dbReference>
<dbReference type="HAMAP" id="MF_00921">
    <property type="entry name" value="PDRP"/>
    <property type="match status" value="1"/>
</dbReference>
<dbReference type="InterPro" id="IPR005177">
    <property type="entry name" value="Kinase-pyrophosphorylase"/>
</dbReference>
<dbReference type="InterPro" id="IPR026565">
    <property type="entry name" value="PPDK_reg"/>
</dbReference>
<dbReference type="NCBIfam" id="NF003742">
    <property type="entry name" value="PRK05339.1"/>
    <property type="match status" value="1"/>
</dbReference>
<dbReference type="PANTHER" id="PTHR31756">
    <property type="entry name" value="PYRUVATE, PHOSPHATE DIKINASE REGULATORY PROTEIN 1, CHLOROPLASTIC"/>
    <property type="match status" value="1"/>
</dbReference>
<dbReference type="PANTHER" id="PTHR31756:SF3">
    <property type="entry name" value="PYRUVATE, PHOSPHATE DIKINASE REGULATORY PROTEIN 1, CHLOROPLASTIC"/>
    <property type="match status" value="1"/>
</dbReference>
<dbReference type="Pfam" id="PF03618">
    <property type="entry name" value="Kinase-PPPase"/>
    <property type="match status" value="1"/>
</dbReference>
<accession>B3Q8B1</accession>
<organism>
    <name type="scientific">Rhodopseudomonas palustris (strain TIE-1)</name>
    <dbReference type="NCBI Taxonomy" id="395960"/>
    <lineage>
        <taxon>Bacteria</taxon>
        <taxon>Pseudomonadati</taxon>
        <taxon>Pseudomonadota</taxon>
        <taxon>Alphaproteobacteria</taxon>
        <taxon>Hyphomicrobiales</taxon>
        <taxon>Nitrobacteraceae</taxon>
        <taxon>Rhodopseudomonas</taxon>
    </lineage>
</organism>